<proteinExistence type="predicted"/>
<dbReference type="EMBL" id="U75930">
    <property type="protein sequence ID" value="AAC59075.1"/>
    <property type="molecule type" value="Genomic_DNA"/>
</dbReference>
<dbReference type="RefSeq" id="NP_046232.1">
    <property type="nucleotide sequence ID" value="NC_001875.2"/>
</dbReference>
<dbReference type="SMR" id="O10326"/>
<dbReference type="KEGG" id="vg:912039"/>
<dbReference type="Proteomes" id="UP000009248">
    <property type="component" value="Genome"/>
</dbReference>
<protein>
    <recommendedName>
        <fullName>Uncharacterized 9.4 kDa protein</fullName>
    </recommendedName>
</protein>
<gene>
    <name type="ORF">ORF76</name>
</gene>
<reference key="1">
    <citation type="journal article" date="1997" name="Virology">
        <title>The sequence of the Orgyia pseudotsugata multinucleocapsid nuclear polyhedrosis virus genome.</title>
        <authorList>
            <person name="Ahrens C.H."/>
            <person name="Russell R.R."/>
            <person name="Funk C.J."/>
            <person name="Evans J."/>
            <person name="Harwood S."/>
            <person name="Rohrmann G.F."/>
        </authorList>
    </citation>
    <scope>NUCLEOTIDE SEQUENCE [LARGE SCALE GENOMIC DNA]</scope>
</reference>
<name>Y073_NPVOP</name>
<organism>
    <name type="scientific">Orgyia pseudotsugata multicapsid polyhedrosis virus</name>
    <name type="common">OpMNPV</name>
    <dbReference type="NCBI Taxonomy" id="262177"/>
    <lineage>
        <taxon>Viruses</taxon>
        <taxon>Viruses incertae sedis</taxon>
        <taxon>Naldaviricetes</taxon>
        <taxon>Lefavirales</taxon>
        <taxon>Baculoviridae</taxon>
        <taxon>Alphabaculovirus</taxon>
        <taxon>Alphabaculovirus orpseudotsugatae</taxon>
    </lineage>
</organism>
<keyword id="KW-1185">Reference proteome</keyword>
<feature type="chain" id="PRO_0000133013" description="Uncharacterized 9.4 kDa protein">
    <location>
        <begin position="1"/>
        <end position="84"/>
    </location>
</feature>
<sequence length="84" mass="9427">MTPQAALLDVQSEALHLASEVNAFLTTPNSTDFELILTKLSFRARAISFDEVAEPRRSFYESLKLNCIVCINVLIDIVLLKINM</sequence>
<accession>O10326</accession>
<organismHost>
    <name type="scientific">Orgyia pseudotsugata</name>
    <name type="common">Douglas-fir tussock moth</name>
    <dbReference type="NCBI Taxonomy" id="33414"/>
</organismHost>